<dbReference type="EMBL" id="BC151658">
    <property type="protein sequence ID" value="AAI51659.1"/>
    <property type="molecule type" value="mRNA"/>
</dbReference>
<dbReference type="PIR" id="A33102">
    <property type="entry name" value="JDBOB"/>
</dbReference>
<dbReference type="RefSeq" id="NP_001094707.1">
    <property type="nucleotide sequence ID" value="NM_001101237.1"/>
</dbReference>
<dbReference type="SMR" id="P60984"/>
<dbReference type="FunCoup" id="P60984">
    <property type="interactions" value="1371"/>
</dbReference>
<dbReference type="STRING" id="9913.ENSBTAP00000057048"/>
<dbReference type="iPTMnet" id="P60984"/>
<dbReference type="PaxDb" id="9913-ENSBTAP00000041259"/>
<dbReference type="PeptideAtlas" id="P60984"/>
<dbReference type="Ensembl" id="ENSBTAT00000103907.1">
    <property type="protein sequence ID" value="ENSBTAP00000094731.1"/>
    <property type="gene ID" value="ENSBTAG00000054095.2"/>
</dbReference>
<dbReference type="GeneID" id="615255"/>
<dbReference type="KEGG" id="bta:615255"/>
<dbReference type="CTD" id="2764"/>
<dbReference type="VEuPathDB" id="HostDB:ENSBTAG00000054095"/>
<dbReference type="VGNC" id="VGNC:29434">
    <property type="gene designation" value="GMFB"/>
</dbReference>
<dbReference type="eggNOG" id="KOG1736">
    <property type="taxonomic scope" value="Eukaryota"/>
</dbReference>
<dbReference type="GeneTree" id="ENSGT00390000008920"/>
<dbReference type="HOGENOM" id="CLU_087056_1_0_1"/>
<dbReference type="InParanoid" id="P60984"/>
<dbReference type="OMA" id="EWKMLYA"/>
<dbReference type="OrthoDB" id="3919494at2759"/>
<dbReference type="TreeFam" id="TF315147"/>
<dbReference type="Proteomes" id="UP000009136">
    <property type="component" value="Chromosome 10"/>
</dbReference>
<dbReference type="Bgee" id="ENSBTAG00000054095">
    <property type="expression patterns" value="Expressed in occipital lobe and 105 other cell types or tissues"/>
</dbReference>
<dbReference type="GO" id="GO:0030864">
    <property type="term" value="C:cortical actin cytoskeleton"/>
    <property type="evidence" value="ECO:0000318"/>
    <property type="project" value="GO_Central"/>
</dbReference>
<dbReference type="GO" id="GO:0003779">
    <property type="term" value="F:actin binding"/>
    <property type="evidence" value="ECO:0007669"/>
    <property type="project" value="InterPro"/>
</dbReference>
<dbReference type="GO" id="GO:0071933">
    <property type="term" value="F:Arp2/3 complex binding"/>
    <property type="evidence" value="ECO:0000318"/>
    <property type="project" value="GO_Central"/>
</dbReference>
<dbReference type="GO" id="GO:0008083">
    <property type="term" value="F:growth factor activity"/>
    <property type="evidence" value="ECO:0007669"/>
    <property type="project" value="UniProtKB-KW"/>
</dbReference>
<dbReference type="GO" id="GO:0071846">
    <property type="term" value="P:actin filament debranching"/>
    <property type="evidence" value="ECO:0000318"/>
    <property type="project" value="GO_Central"/>
</dbReference>
<dbReference type="GO" id="GO:0034316">
    <property type="term" value="P:negative regulation of Arp2/3 complex-mediated actin nucleation"/>
    <property type="evidence" value="ECO:0000318"/>
    <property type="project" value="GO_Central"/>
</dbReference>
<dbReference type="CDD" id="cd11283">
    <property type="entry name" value="ADF_GMF-beta_like"/>
    <property type="match status" value="1"/>
</dbReference>
<dbReference type="FunFam" id="3.40.20.10:FF:000024">
    <property type="entry name" value="Glia maturation factor"/>
    <property type="match status" value="1"/>
</dbReference>
<dbReference type="Gene3D" id="3.40.20.10">
    <property type="entry name" value="Severin"/>
    <property type="match status" value="1"/>
</dbReference>
<dbReference type="InterPro" id="IPR002108">
    <property type="entry name" value="ADF-H"/>
</dbReference>
<dbReference type="InterPro" id="IPR029006">
    <property type="entry name" value="ADF-H/Gelsolin-like_dom_sf"/>
</dbReference>
<dbReference type="InterPro" id="IPR011171">
    <property type="entry name" value="GMF"/>
</dbReference>
<dbReference type="PANTHER" id="PTHR11249:SF3">
    <property type="entry name" value="GLIA MATURATION FACTOR BETA"/>
    <property type="match status" value="1"/>
</dbReference>
<dbReference type="PANTHER" id="PTHR11249">
    <property type="entry name" value="GLIAL FACTOR NATURATION FACTOR"/>
    <property type="match status" value="1"/>
</dbReference>
<dbReference type="Pfam" id="PF00241">
    <property type="entry name" value="Cofilin_ADF"/>
    <property type="match status" value="1"/>
</dbReference>
<dbReference type="PIRSF" id="PIRSF001788">
    <property type="entry name" value="GMF-beta"/>
    <property type="match status" value="1"/>
</dbReference>
<dbReference type="SMART" id="SM00102">
    <property type="entry name" value="ADF"/>
    <property type="match status" value="1"/>
</dbReference>
<dbReference type="SUPFAM" id="SSF55753">
    <property type="entry name" value="Actin depolymerizing proteins"/>
    <property type="match status" value="1"/>
</dbReference>
<dbReference type="PROSITE" id="PS51263">
    <property type="entry name" value="ADF_H"/>
    <property type="match status" value="1"/>
</dbReference>
<accession>P60984</accession>
<accession>A7E313</accession>
<accession>P17774</accession>
<sequence length="142" mass="16713">MSESLVVCDVAEDLVEKLRKFRFRKETNNAAIIMKIDKDKRLVVLDEELEGISPDELKDELPERQPRFIVYSYKYQHDDGRVSYPLCFIFSSPVGCKPEQQMMYAGSKNKLVQTAELTKVFEIRNTEDLTEEWLREKLGFFH</sequence>
<protein>
    <recommendedName>
        <fullName>Glia maturation factor beta</fullName>
        <shortName>GMF-beta</shortName>
    </recommendedName>
</protein>
<feature type="initiator methionine" description="Removed" evidence="3">
    <location>
        <position position="1"/>
    </location>
</feature>
<feature type="chain" id="PRO_0000214942" description="Glia maturation factor beta">
    <location>
        <begin position="2"/>
        <end position="142"/>
    </location>
</feature>
<feature type="domain" description="ADF-H" evidence="2">
    <location>
        <begin position="4"/>
        <end position="139"/>
    </location>
</feature>
<feature type="modified residue" description="N-acetylserine" evidence="3">
    <location>
        <position position="2"/>
    </location>
</feature>
<organism>
    <name type="scientific">Bos taurus</name>
    <name type="common">Bovine</name>
    <dbReference type="NCBI Taxonomy" id="9913"/>
    <lineage>
        <taxon>Eukaryota</taxon>
        <taxon>Metazoa</taxon>
        <taxon>Chordata</taxon>
        <taxon>Craniata</taxon>
        <taxon>Vertebrata</taxon>
        <taxon>Euteleostomi</taxon>
        <taxon>Mammalia</taxon>
        <taxon>Eutheria</taxon>
        <taxon>Laurasiatheria</taxon>
        <taxon>Artiodactyla</taxon>
        <taxon>Ruminantia</taxon>
        <taxon>Pecora</taxon>
        <taxon>Bovidae</taxon>
        <taxon>Bovinae</taxon>
        <taxon>Bos</taxon>
    </lineage>
</organism>
<evidence type="ECO:0000250" key="1"/>
<evidence type="ECO:0000255" key="2">
    <source>
        <dbReference type="PROSITE-ProRule" id="PRU00599"/>
    </source>
</evidence>
<evidence type="ECO:0000269" key="3">
    <source>
    </source>
</evidence>
<evidence type="ECO:0000305" key="4"/>
<keyword id="KW-0007">Acetylation</keyword>
<keyword id="KW-0903">Direct protein sequencing</keyword>
<keyword id="KW-0339">Growth factor</keyword>
<keyword id="KW-0597">Phosphoprotein</keyword>
<keyword id="KW-1185">Reference proteome</keyword>
<proteinExistence type="evidence at protein level"/>
<name>GMFB_BOVIN</name>
<comment type="function">
    <text>This protein causes differentiation of brain cells, stimulation of neural regeneration, and inhibition of proliferation of tumor cells.</text>
</comment>
<comment type="PTM">
    <text evidence="1">Phosphorylated; stimulated by phorbol ester.</text>
</comment>
<comment type="similarity">
    <text evidence="4">Belongs to the actin-binding proteins ADF family. GMF subfamily.</text>
</comment>
<gene>
    <name type="primary">GMFB</name>
</gene>
<reference key="1">
    <citation type="submission" date="2007-08" db="EMBL/GenBank/DDBJ databases">
        <authorList>
            <consortium name="NIH - Mammalian Gene Collection (MGC) project"/>
        </authorList>
    </citation>
    <scope>NUCLEOTIDE SEQUENCE [LARGE SCALE MRNA]</scope>
    <source>
        <strain>Hereford</strain>
        <tissue>Hypothalamus</tissue>
    </source>
</reference>
<reference key="2">
    <citation type="journal article" date="1990" name="Proc. Natl. Acad. Sci. U.S.A.">
        <title>Complete amino acid sequence of bovine glia maturation factor beta.</title>
        <authorList>
            <person name="Lim R."/>
            <person name="Zaheer A."/>
            <person name="Lane W.S."/>
        </authorList>
    </citation>
    <scope>PROTEIN SEQUENCE OF 2-142</scope>
    <scope>ACETYLATION AT SER-2</scope>
</reference>